<proteinExistence type="inferred from homology"/>
<feature type="chain" id="PRO_0000173212" description="Large ribosomal subunit protein bL31B">
    <location>
        <begin position="1"/>
        <end position="87"/>
    </location>
</feature>
<reference key="1">
    <citation type="journal article" date="2004" name="Proc. Natl. Acad. Sci. U.S.A.">
        <title>Structural flexibility in the Burkholderia mallei genome.</title>
        <authorList>
            <person name="Nierman W.C."/>
            <person name="DeShazer D."/>
            <person name="Kim H.S."/>
            <person name="Tettelin H."/>
            <person name="Nelson K.E."/>
            <person name="Feldblyum T.V."/>
            <person name="Ulrich R.L."/>
            <person name="Ronning C.M."/>
            <person name="Brinkac L.M."/>
            <person name="Daugherty S.C."/>
            <person name="Davidsen T.D."/>
            <person name="DeBoy R.T."/>
            <person name="Dimitrov G."/>
            <person name="Dodson R.J."/>
            <person name="Durkin A.S."/>
            <person name="Gwinn M.L."/>
            <person name="Haft D.H."/>
            <person name="Khouri H.M."/>
            <person name="Kolonay J.F."/>
            <person name="Madupu R."/>
            <person name="Mohammoud Y."/>
            <person name="Nelson W.C."/>
            <person name="Radune D."/>
            <person name="Romero C.M."/>
            <person name="Sarria S."/>
            <person name="Selengut J."/>
            <person name="Shamblin C."/>
            <person name="Sullivan S.A."/>
            <person name="White O."/>
            <person name="Yu Y."/>
            <person name="Zafar N."/>
            <person name="Zhou L."/>
            <person name="Fraser C.M."/>
        </authorList>
    </citation>
    <scope>NUCLEOTIDE SEQUENCE [LARGE SCALE GENOMIC DNA]</scope>
    <source>
        <strain>ATCC 23344</strain>
    </source>
</reference>
<sequence length="87" mass="9912">MKQGIHPDYREVVFQDMSNGFKFITRSTIQTRETIEFEGKTYPLAKIEVSSESHSFYTGQQKIMDTAGRVEKFKNKFGARASGKAAK</sequence>
<protein>
    <recommendedName>
        <fullName evidence="1">Large ribosomal subunit protein bL31B</fullName>
    </recommendedName>
    <alternativeName>
        <fullName evidence="2">50S ribosomal protein L31 type B</fullName>
    </alternativeName>
</protein>
<evidence type="ECO:0000255" key="1">
    <source>
        <dbReference type="HAMAP-Rule" id="MF_00502"/>
    </source>
</evidence>
<evidence type="ECO:0000305" key="2"/>
<accession>Q62JU1</accession>
<dbReference type="EMBL" id="CP000010">
    <property type="protein sequence ID" value="AAU47604.1"/>
    <property type="molecule type" value="Genomic_DNA"/>
</dbReference>
<dbReference type="RefSeq" id="WP_004193070.1">
    <property type="nucleotide sequence ID" value="NC_006348.1"/>
</dbReference>
<dbReference type="RefSeq" id="YP_103028.1">
    <property type="nucleotide sequence ID" value="NC_006348.1"/>
</dbReference>
<dbReference type="SMR" id="Q62JU1"/>
<dbReference type="KEGG" id="bma:BMA1369"/>
<dbReference type="PATRIC" id="fig|243160.12.peg.1407"/>
<dbReference type="eggNOG" id="COG0254">
    <property type="taxonomic scope" value="Bacteria"/>
</dbReference>
<dbReference type="HOGENOM" id="CLU_114306_2_1_4"/>
<dbReference type="Proteomes" id="UP000006693">
    <property type="component" value="Chromosome 1"/>
</dbReference>
<dbReference type="GO" id="GO:1990904">
    <property type="term" value="C:ribonucleoprotein complex"/>
    <property type="evidence" value="ECO:0007669"/>
    <property type="project" value="UniProtKB-KW"/>
</dbReference>
<dbReference type="GO" id="GO:0005840">
    <property type="term" value="C:ribosome"/>
    <property type="evidence" value="ECO:0007669"/>
    <property type="project" value="UniProtKB-KW"/>
</dbReference>
<dbReference type="GO" id="GO:0003735">
    <property type="term" value="F:structural constituent of ribosome"/>
    <property type="evidence" value="ECO:0007669"/>
    <property type="project" value="InterPro"/>
</dbReference>
<dbReference type="GO" id="GO:0006412">
    <property type="term" value="P:translation"/>
    <property type="evidence" value="ECO:0007669"/>
    <property type="project" value="UniProtKB-UniRule"/>
</dbReference>
<dbReference type="Gene3D" id="4.10.830.30">
    <property type="entry name" value="Ribosomal protein L31"/>
    <property type="match status" value="1"/>
</dbReference>
<dbReference type="HAMAP" id="MF_00502">
    <property type="entry name" value="Ribosomal_bL31_2"/>
    <property type="match status" value="1"/>
</dbReference>
<dbReference type="InterPro" id="IPR034704">
    <property type="entry name" value="Ribosomal_bL28/bL31-like_sf"/>
</dbReference>
<dbReference type="InterPro" id="IPR002150">
    <property type="entry name" value="Ribosomal_bL31"/>
</dbReference>
<dbReference type="InterPro" id="IPR027493">
    <property type="entry name" value="Ribosomal_bL31_B"/>
</dbReference>
<dbReference type="InterPro" id="IPR042105">
    <property type="entry name" value="Ribosomal_bL31_sf"/>
</dbReference>
<dbReference type="NCBIfam" id="TIGR00105">
    <property type="entry name" value="L31"/>
    <property type="match status" value="1"/>
</dbReference>
<dbReference type="NCBIfam" id="NF002462">
    <property type="entry name" value="PRK01678.1"/>
    <property type="match status" value="1"/>
</dbReference>
<dbReference type="PANTHER" id="PTHR33280">
    <property type="entry name" value="50S RIBOSOMAL PROTEIN L31, CHLOROPLASTIC"/>
    <property type="match status" value="1"/>
</dbReference>
<dbReference type="PANTHER" id="PTHR33280:SF1">
    <property type="entry name" value="LARGE RIBOSOMAL SUBUNIT PROTEIN BL31C"/>
    <property type="match status" value="1"/>
</dbReference>
<dbReference type="Pfam" id="PF01197">
    <property type="entry name" value="Ribosomal_L31"/>
    <property type="match status" value="1"/>
</dbReference>
<dbReference type="PRINTS" id="PR01249">
    <property type="entry name" value="RIBOSOMALL31"/>
</dbReference>
<dbReference type="SUPFAM" id="SSF143800">
    <property type="entry name" value="L28p-like"/>
    <property type="match status" value="1"/>
</dbReference>
<name>RL31B_BURMA</name>
<gene>
    <name evidence="1" type="primary">rpmE2</name>
    <name type="synonym">rpmE</name>
    <name type="ordered locus">BMA1369</name>
</gene>
<comment type="subunit">
    <text evidence="1">Part of the 50S ribosomal subunit.</text>
</comment>
<comment type="similarity">
    <text evidence="1">Belongs to the bacterial ribosomal protein bL31 family. Type B subfamily.</text>
</comment>
<organism>
    <name type="scientific">Burkholderia mallei (strain ATCC 23344)</name>
    <dbReference type="NCBI Taxonomy" id="243160"/>
    <lineage>
        <taxon>Bacteria</taxon>
        <taxon>Pseudomonadati</taxon>
        <taxon>Pseudomonadota</taxon>
        <taxon>Betaproteobacteria</taxon>
        <taxon>Burkholderiales</taxon>
        <taxon>Burkholderiaceae</taxon>
        <taxon>Burkholderia</taxon>
        <taxon>pseudomallei group</taxon>
    </lineage>
</organism>
<keyword id="KW-1185">Reference proteome</keyword>
<keyword id="KW-0687">Ribonucleoprotein</keyword>
<keyword id="KW-0689">Ribosomal protein</keyword>